<organism>
    <name type="scientific">Mus musculus</name>
    <name type="common">Mouse</name>
    <dbReference type="NCBI Taxonomy" id="10090"/>
    <lineage>
        <taxon>Eukaryota</taxon>
        <taxon>Metazoa</taxon>
        <taxon>Chordata</taxon>
        <taxon>Craniata</taxon>
        <taxon>Vertebrata</taxon>
        <taxon>Euteleostomi</taxon>
        <taxon>Mammalia</taxon>
        <taxon>Eutheria</taxon>
        <taxon>Euarchontoglires</taxon>
        <taxon>Glires</taxon>
        <taxon>Rodentia</taxon>
        <taxon>Myomorpha</taxon>
        <taxon>Muroidea</taxon>
        <taxon>Muridae</taxon>
        <taxon>Murinae</taxon>
        <taxon>Mus</taxon>
        <taxon>Mus</taxon>
    </lineage>
</organism>
<reference key="1">
    <citation type="journal article" date="2004" name="Genome Res.">
        <title>The status, quality, and expansion of the NIH full-length cDNA project: the Mammalian Gene Collection (MGC).</title>
        <authorList>
            <consortium name="The MGC Project Team"/>
        </authorList>
    </citation>
    <scope>NUCLEOTIDE SEQUENCE [LARGE SCALE MRNA]</scope>
    <source>
        <tissue>Limb</tissue>
    </source>
</reference>
<reference key="2">
    <citation type="journal article" date="2016" name="PLoS ONE">
        <title>Plakophilin-1, a Novel Wnt Signaling Regulator, Is Critical for Tooth Development and Ameloblast Differentiation.</title>
        <authorList>
            <person name="Miyazaki K."/>
            <person name="Yoshizaki K."/>
            <person name="Arai C."/>
            <person name="Yamada A."/>
            <person name="Saito K."/>
            <person name="Ishikawa M."/>
            <person name="Xue H."/>
            <person name="Funada K."/>
            <person name="Haruyama N."/>
            <person name="Yamada Y."/>
            <person name="Fukumoto S."/>
            <person name="Takahashi I."/>
        </authorList>
    </citation>
    <scope>FUNCTION</scope>
</reference>
<sequence length="209" mass="22346">MLPRHSCSLLLFLFLLPSVPMEPHPPSSTLPPFLAPEWDLLSPRVALSRGAPAGPPLLFLLEAGAYGEPAGAPANRSRRGVSETAPASRRGELAVCDAVSGWVTDRRTAVDLRGREVEVLGEVPAAGGSPLRQYFFETRCKAESAGEGGPGVGGGGCRGVDRRHWLSECKAKQSYVRALTADSQGRVGWRWIRIDTACVCTLLSRTGRA</sequence>
<gene>
    <name type="primary">Ntf4</name>
    <name type="synonym">Ntf5</name>
</gene>
<name>NTF4_MOUSE</name>
<comment type="function">
    <text evidence="2 4">Target-derived survival factor for peripheral sensory sympathetic neurons (By similarity). May promote ameloblast differentiation and subsequent reduction in proliferation of ameloblasts (PubMed:27015268).</text>
</comment>
<comment type="subcellular location">
    <subcellularLocation>
        <location evidence="2">Secreted</location>
    </subcellularLocation>
</comment>
<comment type="similarity">
    <text evidence="5">Belongs to the NGF-beta family.</text>
</comment>
<protein>
    <recommendedName>
        <fullName>Neurotrophin-4</fullName>
        <shortName>NT-4</shortName>
    </recommendedName>
    <alternativeName>
        <fullName>Neurotrophin-5</fullName>
        <shortName>NT-5</shortName>
    </alternativeName>
    <alternativeName>
        <fullName>Neutrophic factor 4</fullName>
    </alternativeName>
</protein>
<dbReference type="EMBL" id="BC052191">
    <property type="protein sequence ID" value="AAH52191.1"/>
    <property type="molecule type" value="mRNA"/>
</dbReference>
<dbReference type="CCDS" id="CCDS21241.1"/>
<dbReference type="RefSeq" id="NP_937833.1">
    <property type="nucleotide sequence ID" value="NM_198190.1"/>
</dbReference>
<dbReference type="RefSeq" id="XP_006541375.1">
    <property type="nucleotide sequence ID" value="XM_006541312.3"/>
</dbReference>
<dbReference type="RefSeq" id="XP_006541376.1">
    <property type="nucleotide sequence ID" value="XM_006541313.2"/>
</dbReference>
<dbReference type="RefSeq" id="XP_011249221.1">
    <property type="nucleotide sequence ID" value="XM_011250919.2"/>
</dbReference>
<dbReference type="SMR" id="Q80VU4"/>
<dbReference type="FunCoup" id="Q80VU4">
    <property type="interactions" value="631"/>
</dbReference>
<dbReference type="STRING" id="10090.ENSMUSP00000057916"/>
<dbReference type="GlyCosmos" id="Q80VU4">
    <property type="glycosylation" value="1 site, No reported glycans"/>
</dbReference>
<dbReference type="GlyGen" id="Q80VU4">
    <property type="glycosylation" value="1 site"/>
</dbReference>
<dbReference type="PhosphoSitePlus" id="Q80VU4"/>
<dbReference type="PaxDb" id="10090-ENSMUSP00000057916"/>
<dbReference type="Antibodypedia" id="65111">
    <property type="antibodies" value="647 antibodies from 42 providers"/>
</dbReference>
<dbReference type="DNASU" id="78405"/>
<dbReference type="Ensembl" id="ENSMUST00000058879.8">
    <property type="protein sequence ID" value="ENSMUSP00000057916.7"/>
    <property type="gene ID" value="ENSMUSG00000074121.4"/>
</dbReference>
<dbReference type="GeneID" id="78405"/>
<dbReference type="KEGG" id="mmu:78405"/>
<dbReference type="UCSC" id="uc009gva.1">
    <property type="organism name" value="mouse"/>
</dbReference>
<dbReference type="AGR" id="MGI:97381"/>
<dbReference type="CTD" id="78405"/>
<dbReference type="MGI" id="MGI:97381">
    <property type="gene designation" value="Ntf5"/>
</dbReference>
<dbReference type="VEuPathDB" id="HostDB:ENSMUSG00000074121"/>
<dbReference type="eggNOG" id="ENOG502R4FK">
    <property type="taxonomic scope" value="Eukaryota"/>
</dbReference>
<dbReference type="GeneTree" id="ENSGT00390000007725"/>
<dbReference type="HOGENOM" id="CLU_059942_2_1_1"/>
<dbReference type="InParanoid" id="Q80VU4"/>
<dbReference type="OMA" id="WNLYSPR"/>
<dbReference type="OrthoDB" id="6491780at2759"/>
<dbReference type="PhylomeDB" id="Q80VU4"/>
<dbReference type="TreeFam" id="TF106463"/>
<dbReference type="Reactome" id="R-MMU-1257604">
    <property type="pathway name" value="PIP3 activates AKT signaling"/>
</dbReference>
<dbReference type="Reactome" id="R-MMU-6811558">
    <property type="pathway name" value="PI5P, PP2A and IER3 Regulate PI3K/AKT Signaling"/>
</dbReference>
<dbReference type="Reactome" id="R-MMU-9026527">
    <property type="pathway name" value="Activated NTRK2 signals through PLCG1"/>
</dbReference>
<dbReference type="Reactome" id="R-MMU-9028731">
    <property type="pathway name" value="Activated NTRK2 signals through FRS2 and FRS3"/>
</dbReference>
<dbReference type="BioGRID-ORCS" id="78405">
    <property type="hits" value="1 hit in 76 CRISPR screens"/>
</dbReference>
<dbReference type="ChiTaRS" id="Ntf5">
    <property type="organism name" value="mouse"/>
</dbReference>
<dbReference type="PRO" id="PR:Q80VU4"/>
<dbReference type="Proteomes" id="UP000000589">
    <property type="component" value="Chromosome 7"/>
</dbReference>
<dbReference type="RNAct" id="Q80VU4">
    <property type="molecule type" value="protein"/>
</dbReference>
<dbReference type="Bgee" id="ENSMUSG00000074121">
    <property type="expression patterns" value="Expressed in manus and 111 other cell types or tissues"/>
</dbReference>
<dbReference type="ExpressionAtlas" id="Q80VU4">
    <property type="expression patterns" value="baseline and differential"/>
</dbReference>
<dbReference type="GO" id="GO:0005788">
    <property type="term" value="C:endoplasmic reticulum lumen"/>
    <property type="evidence" value="ECO:0000304"/>
    <property type="project" value="Reactome"/>
</dbReference>
<dbReference type="GO" id="GO:0005576">
    <property type="term" value="C:extracellular region"/>
    <property type="evidence" value="ECO:0000304"/>
    <property type="project" value="Reactome"/>
</dbReference>
<dbReference type="GO" id="GO:0008083">
    <property type="term" value="F:growth factor activity"/>
    <property type="evidence" value="ECO:0007669"/>
    <property type="project" value="UniProtKB-KW"/>
</dbReference>
<dbReference type="GO" id="GO:0005166">
    <property type="term" value="F:neurotrophin p75 receptor binding"/>
    <property type="evidence" value="ECO:0000304"/>
    <property type="project" value="MGI"/>
</dbReference>
<dbReference type="GO" id="GO:0008344">
    <property type="term" value="P:adult locomotory behavior"/>
    <property type="evidence" value="ECO:0000315"/>
    <property type="project" value="MGI"/>
</dbReference>
<dbReference type="GO" id="GO:0036305">
    <property type="term" value="P:ameloblast differentiation"/>
    <property type="evidence" value="ECO:0000315"/>
    <property type="project" value="UniProtKB"/>
</dbReference>
<dbReference type="GO" id="GO:0008544">
    <property type="term" value="P:epidermis development"/>
    <property type="evidence" value="ECO:0000315"/>
    <property type="project" value="MGI"/>
</dbReference>
<dbReference type="GO" id="GO:0007402">
    <property type="term" value="P:ganglion mother cell fate determination"/>
    <property type="evidence" value="ECO:0000315"/>
    <property type="project" value="MGI"/>
</dbReference>
<dbReference type="GO" id="GO:0060384">
    <property type="term" value="P:innervation"/>
    <property type="evidence" value="ECO:0000314"/>
    <property type="project" value="MGI"/>
</dbReference>
<dbReference type="GO" id="GO:0007616">
    <property type="term" value="P:long-term memory"/>
    <property type="evidence" value="ECO:0000315"/>
    <property type="project" value="MGI"/>
</dbReference>
<dbReference type="GO" id="GO:0042490">
    <property type="term" value="P:mechanoreceptor differentiation"/>
    <property type="evidence" value="ECO:0000316"/>
    <property type="project" value="MGI"/>
</dbReference>
<dbReference type="GO" id="GO:0043069">
    <property type="term" value="P:negative regulation of programmed cell death"/>
    <property type="evidence" value="ECO:0000314"/>
    <property type="project" value="MGI"/>
</dbReference>
<dbReference type="GO" id="GO:0008052">
    <property type="term" value="P:sensory organ boundary specification"/>
    <property type="evidence" value="ECO:0000315"/>
    <property type="project" value="MGI"/>
</dbReference>
<dbReference type="GO" id="GO:0061193">
    <property type="term" value="P:taste bud development"/>
    <property type="evidence" value="ECO:0000314"/>
    <property type="project" value="MGI"/>
</dbReference>
<dbReference type="FunFam" id="2.10.90.10:FF:000002">
    <property type="entry name" value="Brain-derived neurotrophic factor"/>
    <property type="match status" value="1"/>
</dbReference>
<dbReference type="Gene3D" id="2.10.90.10">
    <property type="entry name" value="Cystine-knot cytokines"/>
    <property type="match status" value="1"/>
</dbReference>
<dbReference type="InterPro" id="IPR029034">
    <property type="entry name" value="Cystine-knot_cytokine"/>
</dbReference>
<dbReference type="InterPro" id="IPR020408">
    <property type="entry name" value="Nerve_growth_factor-like"/>
</dbReference>
<dbReference type="InterPro" id="IPR002072">
    <property type="entry name" value="Nerve_growth_factor-rel"/>
</dbReference>
<dbReference type="InterPro" id="IPR019846">
    <property type="entry name" value="Nerve_growth_factor_CS"/>
</dbReference>
<dbReference type="InterPro" id="IPR020432">
    <property type="entry name" value="Neurotrophin-4"/>
</dbReference>
<dbReference type="PANTHER" id="PTHR11589">
    <property type="entry name" value="NERVE GROWTH FACTOR NGF -RELATED"/>
    <property type="match status" value="1"/>
</dbReference>
<dbReference type="PANTHER" id="PTHR11589:SF8">
    <property type="entry name" value="NEUROTROPHIN-4"/>
    <property type="match status" value="1"/>
</dbReference>
<dbReference type="Pfam" id="PF00243">
    <property type="entry name" value="NGF"/>
    <property type="match status" value="1"/>
</dbReference>
<dbReference type="PIRSF" id="PIRSF001789">
    <property type="entry name" value="NGF"/>
    <property type="match status" value="1"/>
</dbReference>
<dbReference type="PRINTS" id="PR01915">
    <property type="entry name" value="NEUROTROPHN4"/>
</dbReference>
<dbReference type="PRINTS" id="PR00268">
    <property type="entry name" value="NGF"/>
</dbReference>
<dbReference type="SMART" id="SM00140">
    <property type="entry name" value="NGF"/>
    <property type="match status" value="1"/>
</dbReference>
<dbReference type="SUPFAM" id="SSF57501">
    <property type="entry name" value="Cystine-knot cytokines"/>
    <property type="match status" value="1"/>
</dbReference>
<dbReference type="PROSITE" id="PS00248">
    <property type="entry name" value="NGF_1"/>
    <property type="match status" value="1"/>
</dbReference>
<dbReference type="PROSITE" id="PS50270">
    <property type="entry name" value="NGF_2"/>
    <property type="match status" value="1"/>
</dbReference>
<feature type="signal peptide" evidence="3">
    <location>
        <begin position="1"/>
        <end position="21"/>
    </location>
</feature>
<feature type="propeptide" id="PRO_0000019671">
    <location>
        <begin position="22"/>
        <end position="79"/>
    </location>
</feature>
<feature type="chain" id="PRO_0000019672" description="Neurotrophin-4">
    <location>
        <begin position="80"/>
        <end position="209"/>
    </location>
</feature>
<feature type="glycosylation site" description="N-linked (GlcNAc...) asparagine" evidence="3">
    <location>
        <position position="75"/>
    </location>
</feature>
<feature type="disulfide bond" evidence="1">
    <location>
        <begin position="96"/>
        <end position="169"/>
    </location>
</feature>
<feature type="disulfide bond" evidence="1">
    <location>
        <begin position="140"/>
        <end position="198"/>
    </location>
</feature>
<feature type="disulfide bond" evidence="1">
    <location>
        <begin position="157"/>
        <end position="200"/>
    </location>
</feature>
<proteinExistence type="evidence at transcript level"/>
<keyword id="KW-0165">Cleavage on pair of basic residues</keyword>
<keyword id="KW-1015">Disulfide bond</keyword>
<keyword id="KW-0325">Glycoprotein</keyword>
<keyword id="KW-0339">Growth factor</keyword>
<keyword id="KW-1185">Reference proteome</keyword>
<keyword id="KW-0964">Secreted</keyword>
<keyword id="KW-0732">Signal</keyword>
<evidence type="ECO:0000250" key="1"/>
<evidence type="ECO:0000250" key="2">
    <source>
        <dbReference type="UniProtKB" id="P34130"/>
    </source>
</evidence>
<evidence type="ECO:0000255" key="3"/>
<evidence type="ECO:0000269" key="4">
    <source>
    </source>
</evidence>
<evidence type="ECO:0000305" key="5"/>
<accession>Q80VU4</accession>